<dbReference type="EMBL" id="AK007533">
    <property type="protein sequence ID" value="BAB25094.1"/>
    <property type="molecule type" value="mRNA"/>
</dbReference>
<dbReference type="EMBL" id="BC018329">
    <property type="protein sequence ID" value="AAH18329.1"/>
    <property type="molecule type" value="mRNA"/>
</dbReference>
<dbReference type="EMBL" id="BC085100">
    <property type="protein sequence ID" value="AAH85100.1"/>
    <property type="molecule type" value="mRNA"/>
</dbReference>
<dbReference type="EMBL" id="BC100442">
    <property type="protein sequence ID" value="AAI00443.1"/>
    <property type="molecule type" value="mRNA"/>
</dbReference>
<dbReference type="CCDS" id="CCDS30131.1">
    <molecule id="Q8VEL0-2"/>
</dbReference>
<dbReference type="CCDS" id="CCDS72381.1">
    <molecule id="Q8VEL0-1"/>
</dbReference>
<dbReference type="RefSeq" id="NP_001277443.1">
    <molecule id="Q8VEL0-1"/>
    <property type="nucleotide sequence ID" value="NM_001290514.1"/>
</dbReference>
<dbReference type="RefSeq" id="NP_081685.1">
    <molecule id="Q8VEL0-2"/>
    <property type="nucleotide sequence ID" value="NM_027409.5"/>
</dbReference>
<dbReference type="RefSeq" id="XP_006541603.1">
    <molecule id="Q8VEL0-1"/>
    <property type="nucleotide sequence ID" value="XM_006541540.4"/>
</dbReference>
<dbReference type="RefSeq" id="XP_017174106.1">
    <molecule id="Q8VEL0-1"/>
    <property type="nucleotide sequence ID" value="XM_017318617.2"/>
</dbReference>
<dbReference type="SMR" id="Q8VEL0"/>
<dbReference type="FunCoup" id="Q8VEL0">
    <property type="interactions" value="2407"/>
</dbReference>
<dbReference type="STRING" id="10090.ENSMUSP00000023836"/>
<dbReference type="PhosphoSitePlus" id="Q8VEL0"/>
<dbReference type="PaxDb" id="10090-ENSMUSP00000023836"/>
<dbReference type="ProteomicsDB" id="291421">
    <molecule id="Q8VEL0-1"/>
</dbReference>
<dbReference type="ProteomicsDB" id="291422">
    <molecule id="Q8VEL0-2"/>
</dbReference>
<dbReference type="Pumba" id="Q8VEL0"/>
<dbReference type="Antibodypedia" id="30323">
    <property type="antibodies" value="44 antibodies from 17 providers"/>
</dbReference>
<dbReference type="DNASU" id="70380"/>
<dbReference type="Ensembl" id="ENSMUST00000023836.4">
    <molecule id="Q8VEL0-2"/>
    <property type="protein sequence ID" value="ENSMUSP00000023836.4"/>
    <property type="gene ID" value="ENSMUSG00000023074.12"/>
</dbReference>
<dbReference type="Ensembl" id="ENSMUST00000096447.9">
    <molecule id="Q8VEL0-1"/>
    <property type="protein sequence ID" value="ENSMUSP00000094182.3"/>
    <property type="gene ID" value="ENSMUSG00000023074.12"/>
</dbReference>
<dbReference type="Ensembl" id="ENSMUST00000152743.8">
    <molecule id="Q8VEL0-1"/>
    <property type="protein sequence ID" value="ENSMUSP00000129567.2"/>
    <property type="gene ID" value="ENSMUSG00000023074.12"/>
</dbReference>
<dbReference type="GeneID" id="70380"/>
<dbReference type="KEGG" id="mmu:70380"/>
<dbReference type="UCSC" id="uc009tfa.2">
    <molecule id="Q8VEL0-2"/>
    <property type="organism name" value="mouse"/>
</dbReference>
<dbReference type="UCSC" id="uc009tfb.2">
    <molecule id="Q8VEL0-1"/>
    <property type="organism name" value="mouse"/>
</dbReference>
<dbReference type="AGR" id="MGI:1917630"/>
<dbReference type="CTD" id="56180"/>
<dbReference type="MGI" id="MGI:1917630">
    <property type="gene designation" value="Mospd1"/>
</dbReference>
<dbReference type="VEuPathDB" id="HostDB:ENSMUSG00000023074"/>
<dbReference type="eggNOG" id="KOG0439">
    <property type="taxonomic scope" value="Eukaryota"/>
</dbReference>
<dbReference type="GeneTree" id="ENSGT00940000155266"/>
<dbReference type="HOGENOM" id="CLU_088040_0_0_1"/>
<dbReference type="InParanoid" id="Q8VEL0"/>
<dbReference type="OMA" id="VYNPYEF"/>
<dbReference type="PhylomeDB" id="Q8VEL0"/>
<dbReference type="TreeFam" id="TF319778"/>
<dbReference type="BioGRID-ORCS" id="70380">
    <property type="hits" value="2 hits in 76 CRISPR screens"/>
</dbReference>
<dbReference type="ChiTaRS" id="Mospd1">
    <property type="organism name" value="mouse"/>
</dbReference>
<dbReference type="PRO" id="PR:Q8VEL0"/>
<dbReference type="Proteomes" id="UP000000589">
    <property type="component" value="Chromosome X"/>
</dbReference>
<dbReference type="RNAct" id="Q8VEL0">
    <property type="molecule type" value="protein"/>
</dbReference>
<dbReference type="Bgee" id="ENSMUSG00000023074">
    <property type="expression patterns" value="Expressed in animal zygote and 262 other cell types or tissues"/>
</dbReference>
<dbReference type="GO" id="GO:0005737">
    <property type="term" value="C:cytoplasm"/>
    <property type="evidence" value="ECO:0000314"/>
    <property type="project" value="BHF-UCL"/>
</dbReference>
<dbReference type="GO" id="GO:0005789">
    <property type="term" value="C:endoplasmic reticulum membrane"/>
    <property type="evidence" value="ECO:0007669"/>
    <property type="project" value="UniProtKB-SubCell"/>
</dbReference>
<dbReference type="GO" id="GO:0000139">
    <property type="term" value="C:Golgi membrane"/>
    <property type="evidence" value="ECO:0007669"/>
    <property type="project" value="UniProtKB-SubCell"/>
</dbReference>
<dbReference type="GO" id="GO:0005634">
    <property type="term" value="C:nucleus"/>
    <property type="evidence" value="ECO:0000314"/>
    <property type="project" value="BHF-UCL"/>
</dbReference>
<dbReference type="GO" id="GO:0048471">
    <property type="term" value="C:perinuclear region of cytoplasm"/>
    <property type="evidence" value="ECO:0000314"/>
    <property type="project" value="BHF-UCL"/>
</dbReference>
<dbReference type="GO" id="GO:0030154">
    <property type="term" value="P:cell differentiation"/>
    <property type="evidence" value="ECO:0007669"/>
    <property type="project" value="UniProtKB-KW"/>
</dbReference>
<dbReference type="GO" id="GO:0000122">
    <property type="term" value="P:negative regulation of transcription by RNA polymerase II"/>
    <property type="evidence" value="ECO:0000315"/>
    <property type="project" value="BHF-UCL"/>
</dbReference>
<dbReference type="GO" id="GO:0045944">
    <property type="term" value="P:positive regulation of transcription by RNA polymerase II"/>
    <property type="evidence" value="ECO:0000315"/>
    <property type="project" value="BHF-UCL"/>
</dbReference>
<dbReference type="FunFam" id="2.60.40.10:FF:000431">
    <property type="entry name" value="motile sperm domain-containing protein 1"/>
    <property type="match status" value="1"/>
</dbReference>
<dbReference type="Gene3D" id="2.60.40.10">
    <property type="entry name" value="Immunoglobulins"/>
    <property type="match status" value="1"/>
</dbReference>
<dbReference type="InterPro" id="IPR013783">
    <property type="entry name" value="Ig-like_fold"/>
</dbReference>
<dbReference type="InterPro" id="IPR039283">
    <property type="entry name" value="MOSPD1/3"/>
</dbReference>
<dbReference type="InterPro" id="IPR000535">
    <property type="entry name" value="MSP_dom"/>
</dbReference>
<dbReference type="InterPro" id="IPR008962">
    <property type="entry name" value="PapD-like_sf"/>
</dbReference>
<dbReference type="PANTHER" id="PTHR34441">
    <property type="entry name" value="MOTILE SPERM DOMAIN-CONTAINING PROTEIN 1"/>
    <property type="match status" value="1"/>
</dbReference>
<dbReference type="PANTHER" id="PTHR34441:SF2">
    <property type="entry name" value="MOTILE SPERM DOMAIN-CONTAINING PROTEIN 1"/>
    <property type="match status" value="1"/>
</dbReference>
<dbReference type="Pfam" id="PF00635">
    <property type="entry name" value="Motile_Sperm"/>
    <property type="match status" value="1"/>
</dbReference>
<dbReference type="SUPFAM" id="SSF49354">
    <property type="entry name" value="PapD-like"/>
    <property type="match status" value="1"/>
</dbReference>
<dbReference type="PROSITE" id="PS50202">
    <property type="entry name" value="MSP"/>
    <property type="match status" value="1"/>
</dbReference>
<organism>
    <name type="scientific">Mus musculus</name>
    <name type="common">Mouse</name>
    <dbReference type="NCBI Taxonomy" id="10090"/>
    <lineage>
        <taxon>Eukaryota</taxon>
        <taxon>Metazoa</taxon>
        <taxon>Chordata</taxon>
        <taxon>Craniata</taxon>
        <taxon>Vertebrata</taxon>
        <taxon>Euteleostomi</taxon>
        <taxon>Mammalia</taxon>
        <taxon>Eutheria</taxon>
        <taxon>Euarchontoglires</taxon>
        <taxon>Glires</taxon>
        <taxon>Rodentia</taxon>
        <taxon>Myomorpha</taxon>
        <taxon>Muroidea</taxon>
        <taxon>Muridae</taxon>
        <taxon>Murinae</taxon>
        <taxon>Mus</taxon>
        <taxon>Mus</taxon>
    </lineage>
</organism>
<keyword id="KW-0025">Alternative splicing</keyword>
<keyword id="KW-0221">Differentiation</keyword>
<keyword id="KW-0256">Endoplasmic reticulum</keyword>
<keyword id="KW-0333">Golgi apparatus</keyword>
<keyword id="KW-0472">Membrane</keyword>
<keyword id="KW-1185">Reference proteome</keyword>
<keyword id="KW-0812">Transmembrane</keyword>
<keyword id="KW-1133">Transmembrane helix</keyword>
<reference key="1">
    <citation type="journal article" date="2005" name="Science">
        <title>The transcriptional landscape of the mammalian genome.</title>
        <authorList>
            <person name="Carninci P."/>
            <person name="Kasukawa T."/>
            <person name="Katayama S."/>
            <person name="Gough J."/>
            <person name="Frith M.C."/>
            <person name="Maeda N."/>
            <person name="Oyama R."/>
            <person name="Ravasi T."/>
            <person name="Lenhard B."/>
            <person name="Wells C."/>
            <person name="Kodzius R."/>
            <person name="Shimokawa K."/>
            <person name="Bajic V.B."/>
            <person name="Brenner S.E."/>
            <person name="Batalov S."/>
            <person name="Forrest A.R."/>
            <person name="Zavolan M."/>
            <person name="Davis M.J."/>
            <person name="Wilming L.G."/>
            <person name="Aidinis V."/>
            <person name="Allen J.E."/>
            <person name="Ambesi-Impiombato A."/>
            <person name="Apweiler R."/>
            <person name="Aturaliya R.N."/>
            <person name="Bailey T.L."/>
            <person name="Bansal M."/>
            <person name="Baxter L."/>
            <person name="Beisel K.W."/>
            <person name="Bersano T."/>
            <person name="Bono H."/>
            <person name="Chalk A.M."/>
            <person name="Chiu K.P."/>
            <person name="Choudhary V."/>
            <person name="Christoffels A."/>
            <person name="Clutterbuck D.R."/>
            <person name="Crowe M.L."/>
            <person name="Dalla E."/>
            <person name="Dalrymple B.P."/>
            <person name="de Bono B."/>
            <person name="Della Gatta G."/>
            <person name="di Bernardo D."/>
            <person name="Down T."/>
            <person name="Engstrom P."/>
            <person name="Fagiolini M."/>
            <person name="Faulkner G."/>
            <person name="Fletcher C.F."/>
            <person name="Fukushima T."/>
            <person name="Furuno M."/>
            <person name="Futaki S."/>
            <person name="Gariboldi M."/>
            <person name="Georgii-Hemming P."/>
            <person name="Gingeras T.R."/>
            <person name="Gojobori T."/>
            <person name="Green R.E."/>
            <person name="Gustincich S."/>
            <person name="Harbers M."/>
            <person name="Hayashi Y."/>
            <person name="Hensch T.K."/>
            <person name="Hirokawa N."/>
            <person name="Hill D."/>
            <person name="Huminiecki L."/>
            <person name="Iacono M."/>
            <person name="Ikeo K."/>
            <person name="Iwama A."/>
            <person name="Ishikawa T."/>
            <person name="Jakt M."/>
            <person name="Kanapin A."/>
            <person name="Katoh M."/>
            <person name="Kawasawa Y."/>
            <person name="Kelso J."/>
            <person name="Kitamura H."/>
            <person name="Kitano H."/>
            <person name="Kollias G."/>
            <person name="Krishnan S.P."/>
            <person name="Kruger A."/>
            <person name="Kummerfeld S.K."/>
            <person name="Kurochkin I.V."/>
            <person name="Lareau L.F."/>
            <person name="Lazarevic D."/>
            <person name="Lipovich L."/>
            <person name="Liu J."/>
            <person name="Liuni S."/>
            <person name="McWilliam S."/>
            <person name="Madan Babu M."/>
            <person name="Madera M."/>
            <person name="Marchionni L."/>
            <person name="Matsuda H."/>
            <person name="Matsuzawa S."/>
            <person name="Miki H."/>
            <person name="Mignone F."/>
            <person name="Miyake S."/>
            <person name="Morris K."/>
            <person name="Mottagui-Tabar S."/>
            <person name="Mulder N."/>
            <person name="Nakano N."/>
            <person name="Nakauchi H."/>
            <person name="Ng P."/>
            <person name="Nilsson R."/>
            <person name="Nishiguchi S."/>
            <person name="Nishikawa S."/>
            <person name="Nori F."/>
            <person name="Ohara O."/>
            <person name="Okazaki Y."/>
            <person name="Orlando V."/>
            <person name="Pang K.C."/>
            <person name="Pavan W.J."/>
            <person name="Pavesi G."/>
            <person name="Pesole G."/>
            <person name="Petrovsky N."/>
            <person name="Piazza S."/>
            <person name="Reed J."/>
            <person name="Reid J.F."/>
            <person name="Ring B.Z."/>
            <person name="Ringwald M."/>
            <person name="Rost B."/>
            <person name="Ruan Y."/>
            <person name="Salzberg S.L."/>
            <person name="Sandelin A."/>
            <person name="Schneider C."/>
            <person name="Schoenbach C."/>
            <person name="Sekiguchi K."/>
            <person name="Semple C.A."/>
            <person name="Seno S."/>
            <person name="Sessa L."/>
            <person name="Sheng Y."/>
            <person name="Shibata Y."/>
            <person name="Shimada H."/>
            <person name="Shimada K."/>
            <person name="Silva D."/>
            <person name="Sinclair B."/>
            <person name="Sperling S."/>
            <person name="Stupka E."/>
            <person name="Sugiura K."/>
            <person name="Sultana R."/>
            <person name="Takenaka Y."/>
            <person name="Taki K."/>
            <person name="Tammoja K."/>
            <person name="Tan S.L."/>
            <person name="Tang S."/>
            <person name="Taylor M.S."/>
            <person name="Tegner J."/>
            <person name="Teichmann S.A."/>
            <person name="Ueda H.R."/>
            <person name="van Nimwegen E."/>
            <person name="Verardo R."/>
            <person name="Wei C.L."/>
            <person name="Yagi K."/>
            <person name="Yamanishi H."/>
            <person name="Zabarovsky E."/>
            <person name="Zhu S."/>
            <person name="Zimmer A."/>
            <person name="Hide W."/>
            <person name="Bult C."/>
            <person name="Grimmond S.M."/>
            <person name="Teasdale R.D."/>
            <person name="Liu E.T."/>
            <person name="Brusic V."/>
            <person name="Quackenbush J."/>
            <person name="Wahlestedt C."/>
            <person name="Mattick J.S."/>
            <person name="Hume D.A."/>
            <person name="Kai C."/>
            <person name="Sasaki D."/>
            <person name="Tomaru Y."/>
            <person name="Fukuda S."/>
            <person name="Kanamori-Katayama M."/>
            <person name="Suzuki M."/>
            <person name="Aoki J."/>
            <person name="Arakawa T."/>
            <person name="Iida J."/>
            <person name="Imamura K."/>
            <person name="Itoh M."/>
            <person name="Kato T."/>
            <person name="Kawaji H."/>
            <person name="Kawagashira N."/>
            <person name="Kawashima T."/>
            <person name="Kojima M."/>
            <person name="Kondo S."/>
            <person name="Konno H."/>
            <person name="Nakano K."/>
            <person name="Ninomiya N."/>
            <person name="Nishio T."/>
            <person name="Okada M."/>
            <person name="Plessy C."/>
            <person name="Shibata K."/>
            <person name="Shiraki T."/>
            <person name="Suzuki S."/>
            <person name="Tagami M."/>
            <person name="Waki K."/>
            <person name="Watahiki A."/>
            <person name="Okamura-Oho Y."/>
            <person name="Suzuki H."/>
            <person name="Kawai J."/>
            <person name="Hayashizaki Y."/>
        </authorList>
    </citation>
    <scope>NUCLEOTIDE SEQUENCE [LARGE SCALE MRNA] (ISOFORM 2)</scope>
    <source>
        <strain>C57BL/6J</strain>
        <tissue>Pancreas</tissue>
    </source>
</reference>
<reference key="2">
    <citation type="journal article" date="2004" name="Genome Res.">
        <title>The status, quality, and expansion of the NIH full-length cDNA project: the Mammalian Gene Collection (MGC).</title>
        <authorList>
            <consortium name="The MGC Project Team"/>
        </authorList>
    </citation>
    <scope>NUCLEOTIDE SEQUENCE [LARGE SCALE MRNA] (ISOFORM 1)</scope>
    <source>
        <strain>FVB/N</strain>
        <tissue>Mammary tumor</tissue>
        <tissue>Molar</tissue>
        <tissue>Olfactory epithelium</tissue>
    </source>
</reference>
<reference key="3">
    <citation type="journal article" date="2010" name="Cell">
        <title>A tissue-specific atlas of mouse protein phosphorylation and expression.</title>
        <authorList>
            <person name="Huttlin E.L."/>
            <person name="Jedrychowski M.P."/>
            <person name="Elias J.E."/>
            <person name="Goswami T."/>
            <person name="Rad R."/>
            <person name="Beausoleil S.A."/>
            <person name="Villen J."/>
            <person name="Haas W."/>
            <person name="Sowa M.E."/>
            <person name="Gygi S.P."/>
        </authorList>
    </citation>
    <scope>IDENTIFICATION BY MASS SPECTROMETRY [LARGE SCALE ANALYSIS]</scope>
    <source>
        <tissue>Heart</tissue>
        <tissue>Kidney</tissue>
        <tissue>Spleen</tissue>
    </source>
</reference>
<reference key="4">
    <citation type="journal article" date="2011" name="J. Cell. Physiol.">
        <title>Mospd1, a new player in mesenchymal versus epidermal cell differentiation.</title>
        <authorList>
            <person name="Thaler R."/>
            <person name="Rumpler M."/>
            <person name="Spitzer S."/>
            <person name="Klaushofer K."/>
            <person name="Varga F."/>
        </authorList>
    </citation>
    <scope>FUNCTION</scope>
    <scope>SUBCELLULAR LOCATION</scope>
    <scope>TISSUE SPECIFICITY</scope>
    <scope>DEVELOPMENTAL STAGE</scope>
    <scope>INDUCTION</scope>
    <scope>MOTIF</scope>
    <scope>MUTAGENESIS OF 205-GLY--THR-213</scope>
</reference>
<reference key="5">
    <citation type="journal article" date="2015" name="Stem Cells">
        <title>A role for MOSPD1 in mesenchymal stem cell proliferation and differentiation.</title>
        <authorList>
            <person name="Kara M."/>
            <person name="Axton R.A."/>
            <person name="Jackson M."/>
            <person name="Ghaffari S."/>
            <person name="Buerger K."/>
            <person name="Watt A.J."/>
            <person name="Taylor A.H."/>
            <person name="Orr B."/>
            <person name="Hardy W.R."/>
            <person name="Peault B."/>
            <person name="Forrester L.M."/>
        </authorList>
    </citation>
    <scope>FUNCTION</scope>
    <scope>DEVELOPMENTAL STAGE</scope>
</reference>
<evidence type="ECO:0000255" key="1"/>
<evidence type="ECO:0000255" key="2">
    <source>
        <dbReference type="PROSITE-ProRule" id="PRU00132"/>
    </source>
</evidence>
<evidence type="ECO:0000269" key="3">
    <source>
    </source>
</evidence>
<evidence type="ECO:0000269" key="4">
    <source>
    </source>
</evidence>
<evidence type="ECO:0000303" key="5">
    <source>
    </source>
</evidence>
<evidence type="ECO:0000305" key="6">
    <source>
    </source>
</evidence>
<protein>
    <recommendedName>
        <fullName>Motile sperm domain-containing protein 1</fullName>
    </recommendedName>
</protein>
<feature type="chain" id="PRO_0000213460" description="Motile sperm domain-containing protein 1">
    <location>
        <begin position="1"/>
        <end position="213"/>
    </location>
</feature>
<feature type="transmembrane region" description="Helical" evidence="1">
    <location>
        <begin position="159"/>
        <end position="179"/>
    </location>
</feature>
<feature type="transmembrane region" description="Helical" evidence="1">
    <location>
        <begin position="191"/>
        <end position="211"/>
    </location>
</feature>
<feature type="domain" description="MSP" evidence="2">
    <location>
        <begin position="16"/>
        <end position="143"/>
    </location>
</feature>
<feature type="short sequence motif" description="Nuclear export signal" evidence="3">
    <location>
        <begin position="205"/>
        <end position="208"/>
    </location>
</feature>
<feature type="splice variant" id="VSP_014045" description="In isoform 2." evidence="5">
    <original>PE</original>
    <variation>PGK</variation>
    <location>
        <begin position="149"/>
        <end position="150"/>
    </location>
</feature>
<feature type="mutagenesis site" description="Localizes to the nucleus instead of the cytoplasm." evidence="3">
    <location>
        <begin position="204"/>
        <end position="213"/>
    </location>
</feature>
<proteinExistence type="evidence at protein level"/>
<sequence length="213" mass="24074">MHQQKRQPELVEGNLPVFVFPTELIFYADDQSTHKQVLTLYNPYEFALKFKVLCTTPNKYVVVDAAGAVKPQCCVDIVIRHRDVRSCHYGVIDKFRLQVSEQSQRKALGRKEVIATLLPSAKEQQKEEEEKRIKEHLTESVFFEQSCQPENRAVSSGPSLLTVFLGVVCIAALMLPTLGDMESLVPLYLHLSVNQKLVAAYILGLITMAILRT</sequence>
<name>MSPD1_MOUSE</name>
<gene>
    <name type="primary">Mospd1</name>
</gene>
<comment type="function">
    <text evidence="3 4">Plays a role in differentiation and/or proliferation of mesenchymal stem cells (PubMed:21792907, PubMed:26175344). Proposed to be involved in epithelial-to-mesenchymal transition (EMT) (PubMed:21792907). However, another study suggests that it is not required for EMT or stem cell self-renewal and acts during later stages of differentiation (PubMed:26175344).</text>
</comment>
<comment type="subcellular location">
    <subcellularLocation>
        <location evidence="6">Endoplasmic reticulum membrane</location>
        <topology evidence="1">Multi-pass membrane protein</topology>
    </subcellularLocation>
    <subcellularLocation>
        <location evidence="6">Golgi apparatus membrane</location>
        <topology evidence="1">Multi-pass membrane protein</topology>
    </subcellularLocation>
</comment>
<comment type="alternative products">
    <event type="alternative splicing"/>
    <isoform>
        <id>Q8VEL0-1</id>
        <name>1</name>
        <sequence type="displayed"/>
    </isoform>
    <isoform>
        <id>Q8VEL0-2</id>
        <name>2</name>
        <sequence type="described" ref="VSP_014045"/>
    </isoform>
</comment>
<comment type="tissue specificity">
    <text evidence="3">Widely expressed. Shows highest expression in ribs, and slightly lower levels of expression in heart, kidney, muscle, thymus, calvariae and lung. Also detected at low levels in spleen and liver.</text>
</comment>
<comment type="developmental stage">
    <text evidence="3 4">Expressed at low levels in undifferentiated mesenchymal stem cells and then shows increasing expression levels as differentiation proceeds.</text>
</comment>
<comment type="induction">
    <text evidence="3">May be up-regulated in response to cell-cell contact.</text>
</comment>
<accession>Q8VEL0</accession>
<accession>Q497P5</accession>
<accession>Q9D8Y9</accession>